<sequence length="471" mass="51572">MDTIIEPFRIKSVEPIQLTSRAERERMIRDAHYNLFNLHADDVIIDLLTDSGTSAMSAAQWAGLMQGDESYAGSPSYFRFEEAVKDLMPFEHVIPTHQGRAAERILMGIVAGPDAKIPSNTHFDTTRANIEATGAEAVDLVIDAGHVPDAEHPFKGNINLDRLEALLDAEGDRVPIVMLTVTNNTGGGQPVSLANIRGAKALCDTYDVPLVLDACRFAENAYFIKQREDGYGDRSVKEIVREMFSHADGMTMSAKKDALVNIGGWLALDDDAWARKARNQLILTEGFPTYGGLAGRDLEAIAVGLQEIVDEDYLEYRMASTRYLGEALTELGVPIVKPVGGHAVYIDAKSLLPHIPPLDYPAQSLAVALYVTGGIRGVEIGSVMFGRQPDGSEEPADQELLRLAIPRRVYTQSHVDYVIECFEALVGRKGALCGYEITEEPPQLRHFTAHLRPKAPEAVHHETDGPVEASS</sequence>
<organism>
    <name type="scientific">Salinibacter ruber (strain DSM 13855 / M31)</name>
    <dbReference type="NCBI Taxonomy" id="309807"/>
    <lineage>
        <taxon>Bacteria</taxon>
        <taxon>Pseudomonadati</taxon>
        <taxon>Rhodothermota</taxon>
        <taxon>Rhodothermia</taxon>
        <taxon>Rhodothermales</taxon>
        <taxon>Salinibacteraceae</taxon>
        <taxon>Salinibacter</taxon>
    </lineage>
</organism>
<evidence type="ECO:0000255" key="1">
    <source>
        <dbReference type="HAMAP-Rule" id="MF_00544"/>
    </source>
</evidence>
<dbReference type="EC" id="4.1.99.1" evidence="1"/>
<dbReference type="EMBL" id="CP000159">
    <property type="protein sequence ID" value="ABC45644.1"/>
    <property type="molecule type" value="Genomic_DNA"/>
</dbReference>
<dbReference type="RefSeq" id="YP_445827.1">
    <property type="nucleotide sequence ID" value="NC_007677.1"/>
</dbReference>
<dbReference type="SMR" id="Q2S1V4"/>
<dbReference type="STRING" id="309807.SRU_1708"/>
<dbReference type="EnsemblBacteria" id="ABC45644">
    <property type="protein sequence ID" value="ABC45644"/>
    <property type="gene ID" value="SRU_1708"/>
</dbReference>
<dbReference type="KEGG" id="sru:SRU_1708"/>
<dbReference type="PATRIC" id="fig|309807.25.peg.1772"/>
<dbReference type="eggNOG" id="COG3033">
    <property type="taxonomic scope" value="Bacteria"/>
</dbReference>
<dbReference type="HOGENOM" id="CLU_047223_0_0_10"/>
<dbReference type="OrthoDB" id="9764079at2"/>
<dbReference type="UniPathway" id="UPA00332">
    <property type="reaction ID" value="UER00452"/>
</dbReference>
<dbReference type="Proteomes" id="UP000008674">
    <property type="component" value="Chromosome"/>
</dbReference>
<dbReference type="GO" id="GO:0009034">
    <property type="term" value="F:tryptophanase activity"/>
    <property type="evidence" value="ECO:0007669"/>
    <property type="project" value="UniProtKB-UniRule"/>
</dbReference>
<dbReference type="CDD" id="cd00617">
    <property type="entry name" value="Tnase_like"/>
    <property type="match status" value="1"/>
</dbReference>
<dbReference type="Gene3D" id="3.90.1150.10">
    <property type="entry name" value="Aspartate Aminotransferase, domain 1"/>
    <property type="match status" value="1"/>
</dbReference>
<dbReference type="Gene3D" id="3.40.640.10">
    <property type="entry name" value="Type I PLP-dependent aspartate aminotransferase-like (Major domain)"/>
    <property type="match status" value="1"/>
</dbReference>
<dbReference type="HAMAP" id="MF_00544">
    <property type="entry name" value="Tryptophanase"/>
    <property type="match status" value="1"/>
</dbReference>
<dbReference type="InterPro" id="IPR001597">
    <property type="entry name" value="ArAA_b-elim_lyase/Thr_aldolase"/>
</dbReference>
<dbReference type="InterPro" id="IPR011166">
    <property type="entry name" value="Beta-eliminating_lyase"/>
</dbReference>
<dbReference type="InterPro" id="IPR015424">
    <property type="entry name" value="PyrdxlP-dep_Trfase"/>
</dbReference>
<dbReference type="InterPro" id="IPR015421">
    <property type="entry name" value="PyrdxlP-dep_Trfase_major"/>
</dbReference>
<dbReference type="InterPro" id="IPR015422">
    <property type="entry name" value="PyrdxlP-dep_Trfase_small"/>
</dbReference>
<dbReference type="InterPro" id="IPR013440">
    <property type="entry name" value="TNase"/>
</dbReference>
<dbReference type="NCBIfam" id="NF009709">
    <property type="entry name" value="PRK13238.1"/>
    <property type="match status" value="1"/>
</dbReference>
<dbReference type="PANTHER" id="PTHR32325">
    <property type="entry name" value="BETA-ELIMINATING LYASE-LIKE PROTEIN-RELATED"/>
    <property type="match status" value="1"/>
</dbReference>
<dbReference type="PANTHER" id="PTHR32325:SF4">
    <property type="entry name" value="TRYPTOPHANASE"/>
    <property type="match status" value="1"/>
</dbReference>
<dbReference type="Pfam" id="PF01212">
    <property type="entry name" value="Beta_elim_lyase"/>
    <property type="match status" value="1"/>
</dbReference>
<dbReference type="PIRSF" id="PIRSF001386">
    <property type="entry name" value="Trpase"/>
    <property type="match status" value="1"/>
</dbReference>
<dbReference type="SUPFAM" id="SSF53383">
    <property type="entry name" value="PLP-dependent transferases"/>
    <property type="match status" value="1"/>
</dbReference>
<feature type="chain" id="PRO_1000017733" description="Tryptophanase">
    <location>
        <begin position="1"/>
        <end position="471"/>
    </location>
</feature>
<feature type="modified residue" description="N6-(pyridoxal phosphate)lysine" evidence="1">
    <location>
        <position position="256"/>
    </location>
</feature>
<protein>
    <recommendedName>
        <fullName evidence="1">Tryptophanase</fullName>
        <ecNumber evidence="1">4.1.99.1</ecNumber>
    </recommendedName>
    <alternativeName>
        <fullName evidence="1">L-tryptophan indole-lyase</fullName>
        <shortName evidence="1">TNase</shortName>
    </alternativeName>
</protein>
<proteinExistence type="inferred from homology"/>
<accession>Q2S1V4</accession>
<reference key="1">
    <citation type="journal article" date="2005" name="Proc. Natl. Acad. Sci. U.S.A.">
        <title>The genome of Salinibacter ruber: convergence and gene exchange among hyperhalophilic bacteria and archaea.</title>
        <authorList>
            <person name="Mongodin E.F."/>
            <person name="Nelson K.E."/>
            <person name="Daugherty S."/>
            <person name="DeBoy R.T."/>
            <person name="Wister J."/>
            <person name="Khouri H."/>
            <person name="Weidman J."/>
            <person name="Walsh D.A."/>
            <person name="Papke R.T."/>
            <person name="Sanchez Perez G."/>
            <person name="Sharma A.K."/>
            <person name="Nesbo C.L."/>
            <person name="MacLeod D."/>
            <person name="Bapteste E."/>
            <person name="Doolittle W.F."/>
            <person name="Charlebois R.L."/>
            <person name="Legault B."/>
            <person name="Rodriguez-Valera F."/>
        </authorList>
    </citation>
    <scope>NUCLEOTIDE SEQUENCE [LARGE SCALE GENOMIC DNA]</scope>
    <source>
        <strain>DSM 13855 / CECT 5946 / M31</strain>
    </source>
</reference>
<name>TNAA_SALRD</name>
<gene>
    <name evidence="1" type="primary">tnaA</name>
    <name type="ordered locus">SRU_1708</name>
</gene>
<comment type="catalytic activity">
    <reaction evidence="1">
        <text>L-tryptophan + H2O = indole + pyruvate + NH4(+)</text>
        <dbReference type="Rhea" id="RHEA:19553"/>
        <dbReference type="ChEBI" id="CHEBI:15361"/>
        <dbReference type="ChEBI" id="CHEBI:15377"/>
        <dbReference type="ChEBI" id="CHEBI:16881"/>
        <dbReference type="ChEBI" id="CHEBI:28938"/>
        <dbReference type="ChEBI" id="CHEBI:57912"/>
        <dbReference type="EC" id="4.1.99.1"/>
    </reaction>
</comment>
<comment type="cofactor">
    <cofactor evidence="1">
        <name>pyridoxal 5'-phosphate</name>
        <dbReference type="ChEBI" id="CHEBI:597326"/>
    </cofactor>
</comment>
<comment type="pathway">
    <text evidence="1">Amino-acid degradation; L-tryptophan degradation via pyruvate pathway; indole and pyruvate from L-tryptophan: step 1/1.</text>
</comment>
<comment type="subunit">
    <text evidence="1">Homotetramer.</text>
</comment>
<comment type="similarity">
    <text evidence="1">Belongs to the beta-eliminating lyase family.</text>
</comment>
<keyword id="KW-0456">Lyase</keyword>
<keyword id="KW-0663">Pyridoxal phosphate</keyword>
<keyword id="KW-1185">Reference proteome</keyword>
<keyword id="KW-0823">Tryptophan catabolism</keyword>